<feature type="chain" id="PRO_1000142423" description="Large ribosomal subunit protein uL5">
    <location>
        <begin position="1"/>
        <end position="187"/>
    </location>
</feature>
<proteinExistence type="inferred from homology"/>
<dbReference type="EMBL" id="CU458896">
    <property type="protein sequence ID" value="CAM63880.1"/>
    <property type="molecule type" value="Genomic_DNA"/>
</dbReference>
<dbReference type="RefSeq" id="WP_005055683.1">
    <property type="nucleotide sequence ID" value="NZ_MLCG01000001.1"/>
</dbReference>
<dbReference type="SMR" id="B1MGD5"/>
<dbReference type="GeneID" id="93380744"/>
<dbReference type="KEGG" id="mab:MAB_3805c"/>
<dbReference type="Proteomes" id="UP000007137">
    <property type="component" value="Chromosome"/>
</dbReference>
<dbReference type="GO" id="GO:1990904">
    <property type="term" value="C:ribonucleoprotein complex"/>
    <property type="evidence" value="ECO:0007669"/>
    <property type="project" value="UniProtKB-KW"/>
</dbReference>
<dbReference type="GO" id="GO:0005840">
    <property type="term" value="C:ribosome"/>
    <property type="evidence" value="ECO:0007669"/>
    <property type="project" value="UniProtKB-KW"/>
</dbReference>
<dbReference type="GO" id="GO:0019843">
    <property type="term" value="F:rRNA binding"/>
    <property type="evidence" value="ECO:0007669"/>
    <property type="project" value="UniProtKB-UniRule"/>
</dbReference>
<dbReference type="GO" id="GO:0003735">
    <property type="term" value="F:structural constituent of ribosome"/>
    <property type="evidence" value="ECO:0007669"/>
    <property type="project" value="InterPro"/>
</dbReference>
<dbReference type="GO" id="GO:0000049">
    <property type="term" value="F:tRNA binding"/>
    <property type="evidence" value="ECO:0007669"/>
    <property type="project" value="UniProtKB-UniRule"/>
</dbReference>
<dbReference type="GO" id="GO:0006412">
    <property type="term" value="P:translation"/>
    <property type="evidence" value="ECO:0007669"/>
    <property type="project" value="UniProtKB-UniRule"/>
</dbReference>
<dbReference type="FunFam" id="3.30.1440.10:FF:000001">
    <property type="entry name" value="50S ribosomal protein L5"/>
    <property type="match status" value="1"/>
</dbReference>
<dbReference type="Gene3D" id="3.30.1440.10">
    <property type="match status" value="1"/>
</dbReference>
<dbReference type="HAMAP" id="MF_01333_B">
    <property type="entry name" value="Ribosomal_uL5_B"/>
    <property type="match status" value="1"/>
</dbReference>
<dbReference type="InterPro" id="IPR002132">
    <property type="entry name" value="Ribosomal_uL5"/>
</dbReference>
<dbReference type="InterPro" id="IPR020930">
    <property type="entry name" value="Ribosomal_uL5_bac-type"/>
</dbReference>
<dbReference type="InterPro" id="IPR031309">
    <property type="entry name" value="Ribosomal_uL5_C"/>
</dbReference>
<dbReference type="InterPro" id="IPR022803">
    <property type="entry name" value="Ribosomal_uL5_dom_sf"/>
</dbReference>
<dbReference type="InterPro" id="IPR031310">
    <property type="entry name" value="Ribosomal_uL5_N"/>
</dbReference>
<dbReference type="NCBIfam" id="NF000585">
    <property type="entry name" value="PRK00010.1"/>
    <property type="match status" value="1"/>
</dbReference>
<dbReference type="PANTHER" id="PTHR11994">
    <property type="entry name" value="60S RIBOSOMAL PROTEIN L11-RELATED"/>
    <property type="match status" value="1"/>
</dbReference>
<dbReference type="Pfam" id="PF00281">
    <property type="entry name" value="Ribosomal_L5"/>
    <property type="match status" value="1"/>
</dbReference>
<dbReference type="Pfam" id="PF00673">
    <property type="entry name" value="Ribosomal_L5_C"/>
    <property type="match status" value="1"/>
</dbReference>
<dbReference type="PIRSF" id="PIRSF002161">
    <property type="entry name" value="Ribosomal_L5"/>
    <property type="match status" value="1"/>
</dbReference>
<dbReference type="SUPFAM" id="SSF55282">
    <property type="entry name" value="RL5-like"/>
    <property type="match status" value="1"/>
</dbReference>
<gene>
    <name evidence="1" type="primary">rplE</name>
    <name type="ordered locus">MAB_3805c</name>
</gene>
<protein>
    <recommendedName>
        <fullName evidence="1">Large ribosomal subunit protein uL5</fullName>
    </recommendedName>
    <alternativeName>
        <fullName evidence="2">50S ribosomal protein L5</fullName>
    </alternativeName>
</protein>
<comment type="function">
    <text evidence="1">This is one of the proteins that bind and probably mediate the attachment of the 5S RNA into the large ribosomal subunit, where it forms part of the central protuberance. In the 70S ribosome it contacts protein S13 of the 30S subunit (bridge B1b), connecting the 2 subunits; this bridge is implicated in subunit movement. Contacts the P site tRNA; the 5S rRNA and some of its associated proteins might help stabilize positioning of ribosome-bound tRNAs.</text>
</comment>
<comment type="subunit">
    <text evidence="1">Part of the 50S ribosomal subunit; part of the 5S rRNA/L5/L18/L25 subcomplex. Contacts the 5S rRNA and the P site tRNA. Forms a bridge to the 30S subunit in the 70S ribosome.</text>
</comment>
<comment type="similarity">
    <text evidence="1">Belongs to the universal ribosomal protein uL5 family.</text>
</comment>
<reference key="1">
    <citation type="journal article" date="2009" name="PLoS ONE">
        <title>Non mycobacterial virulence genes in the genome of the emerging pathogen Mycobacterium abscessus.</title>
        <authorList>
            <person name="Ripoll F."/>
            <person name="Pasek S."/>
            <person name="Schenowitz C."/>
            <person name="Dossat C."/>
            <person name="Barbe V."/>
            <person name="Rottman M."/>
            <person name="Macheras E."/>
            <person name="Heym B."/>
            <person name="Herrmann J.L."/>
            <person name="Daffe M."/>
            <person name="Brosch R."/>
            <person name="Risler J.L."/>
            <person name="Gaillard J.L."/>
        </authorList>
    </citation>
    <scope>NUCLEOTIDE SEQUENCE [LARGE SCALE GENOMIC DNA]</scope>
    <source>
        <strain>ATCC 19977 / DSM 44196 / CCUG 20993 / CIP 104536 / JCM 13569 / NCTC 13031 / TMC 1543 / L948</strain>
    </source>
</reference>
<accession>B1MGD5</accession>
<keyword id="KW-1185">Reference proteome</keyword>
<keyword id="KW-0687">Ribonucleoprotein</keyword>
<keyword id="KW-0689">Ribosomal protein</keyword>
<keyword id="KW-0694">RNA-binding</keyword>
<keyword id="KW-0699">rRNA-binding</keyword>
<keyword id="KW-0820">tRNA-binding</keyword>
<evidence type="ECO:0000255" key="1">
    <source>
        <dbReference type="HAMAP-Rule" id="MF_01333"/>
    </source>
</evidence>
<evidence type="ECO:0000305" key="2"/>
<organism>
    <name type="scientific">Mycobacteroides abscessus (strain ATCC 19977 / DSM 44196 / CCUG 20993 / CIP 104536 / JCM 13569 / NCTC 13031 / TMC 1543 / L948)</name>
    <name type="common">Mycobacterium abscessus</name>
    <dbReference type="NCBI Taxonomy" id="561007"/>
    <lineage>
        <taxon>Bacteria</taxon>
        <taxon>Bacillati</taxon>
        <taxon>Actinomycetota</taxon>
        <taxon>Actinomycetes</taxon>
        <taxon>Mycobacteriales</taxon>
        <taxon>Mycobacteriaceae</taxon>
        <taxon>Mycobacteroides</taxon>
        <taxon>Mycobacteroides abscessus</taxon>
    </lineage>
</organism>
<sequence>MTTTENAQPRLKTRYREEIKTALNDEFKYANVMQIPGVVKVVVNMGVGDAARDAKLINGAVTDLALITGQKPEIRKARKSIAQFKLREGMPIGARVTLRGDRMWEFLDRLVSIALPRIRDFRGLSPKQFDGKGNYTFGLTEQSMFHEIDVDSIDRPRGMDITVVTSATTDDEGRALLRQLGFPFKEN</sequence>
<name>RL5_MYCA9</name>